<protein>
    <recommendedName>
        <fullName evidence="1">S-adenosylmethionine:tRNA ribosyltransferase-isomerase</fullName>
        <ecNumber evidence="1">2.4.99.17</ecNumber>
    </recommendedName>
    <alternativeName>
        <fullName evidence="1">Queuosine biosynthesis protein QueA</fullName>
    </alternativeName>
</protein>
<proteinExistence type="inferred from homology"/>
<organism>
    <name type="scientific">Treponema denticola (strain ATCC 35405 / DSM 14222 / CIP 103919 / JCM 8153 / KCTC 15104)</name>
    <dbReference type="NCBI Taxonomy" id="243275"/>
    <lineage>
        <taxon>Bacteria</taxon>
        <taxon>Pseudomonadati</taxon>
        <taxon>Spirochaetota</taxon>
        <taxon>Spirochaetia</taxon>
        <taxon>Spirochaetales</taxon>
        <taxon>Treponemataceae</taxon>
        <taxon>Treponema</taxon>
    </lineage>
</organism>
<accession>Q73JQ7</accession>
<gene>
    <name evidence="1" type="primary">queA</name>
    <name type="ordered locus">TDE_2451</name>
</gene>
<evidence type="ECO:0000255" key="1">
    <source>
        <dbReference type="HAMAP-Rule" id="MF_00113"/>
    </source>
</evidence>
<feature type="chain" id="PRO_0000231389" description="S-adenosylmethionine:tRNA ribosyltransferase-isomerase">
    <location>
        <begin position="1"/>
        <end position="347"/>
    </location>
</feature>
<comment type="function">
    <text evidence="1">Transfers and isomerizes the ribose moiety from AdoMet to the 7-aminomethyl group of 7-deazaguanine (preQ1-tRNA) to give epoxyqueuosine (oQ-tRNA).</text>
</comment>
<comment type="catalytic activity">
    <reaction evidence="1">
        <text>7-aminomethyl-7-carbaguanosine(34) in tRNA + S-adenosyl-L-methionine = epoxyqueuosine(34) in tRNA + adenine + L-methionine + 2 H(+)</text>
        <dbReference type="Rhea" id="RHEA:32155"/>
        <dbReference type="Rhea" id="RHEA-COMP:10342"/>
        <dbReference type="Rhea" id="RHEA-COMP:18582"/>
        <dbReference type="ChEBI" id="CHEBI:15378"/>
        <dbReference type="ChEBI" id="CHEBI:16708"/>
        <dbReference type="ChEBI" id="CHEBI:57844"/>
        <dbReference type="ChEBI" id="CHEBI:59789"/>
        <dbReference type="ChEBI" id="CHEBI:82833"/>
        <dbReference type="ChEBI" id="CHEBI:194443"/>
        <dbReference type="EC" id="2.4.99.17"/>
    </reaction>
</comment>
<comment type="pathway">
    <text evidence="1">tRNA modification; tRNA-queuosine biosynthesis.</text>
</comment>
<comment type="subunit">
    <text evidence="1">Monomer.</text>
</comment>
<comment type="subcellular location">
    <subcellularLocation>
        <location evidence="1">Cytoplasm</location>
    </subcellularLocation>
</comment>
<comment type="similarity">
    <text evidence="1">Belongs to the QueA family.</text>
</comment>
<keyword id="KW-0963">Cytoplasm</keyword>
<keyword id="KW-0671">Queuosine biosynthesis</keyword>
<keyword id="KW-1185">Reference proteome</keyword>
<keyword id="KW-0949">S-adenosyl-L-methionine</keyword>
<keyword id="KW-0808">Transferase</keyword>
<sequence>MLTKEFNFDLPEELIAQSPSEKRGGDRLLILDKQSGKLEDRLFTELPEILPKNALMVFNNSKVRHARIYAKSKTNAVCEFLMINPMRDSDGSLWQVMAKKAKRQKPGKTFLFEDGTEAEIIESEIPLESEFRCMKFNRVIDDEWLDKYGHMPLPPYIHRKDTQEDADRYQTVYAEIYGSIAAPTAGLHFTQEVLSKIRDKGIDIEYVTLHVGLGTFLPVRAEKIEDHKMHTEHFFISEKTAQAVEKAKKEGRPIIAVGTTTVRTLESAWDEKRKELKWGNQSTDIFIYPSYKFKLIDKLFTNFHTPESSLVMLVSALAGKENIFKAYRHAVEEKYKFFSYGDAMLIL</sequence>
<reference key="1">
    <citation type="journal article" date="2004" name="Proc. Natl. Acad. Sci. U.S.A.">
        <title>Comparison of the genome of the oral pathogen Treponema denticola with other spirochete genomes.</title>
        <authorList>
            <person name="Seshadri R."/>
            <person name="Myers G.S.A."/>
            <person name="Tettelin H."/>
            <person name="Eisen J.A."/>
            <person name="Heidelberg J.F."/>
            <person name="Dodson R.J."/>
            <person name="Davidsen T.M."/>
            <person name="DeBoy R.T."/>
            <person name="Fouts D.E."/>
            <person name="Haft D.H."/>
            <person name="Selengut J."/>
            <person name="Ren Q."/>
            <person name="Brinkac L.M."/>
            <person name="Madupu R."/>
            <person name="Kolonay J.F."/>
            <person name="Durkin S.A."/>
            <person name="Daugherty S.C."/>
            <person name="Shetty J."/>
            <person name="Shvartsbeyn A."/>
            <person name="Gebregeorgis E."/>
            <person name="Geer K."/>
            <person name="Tsegaye G."/>
            <person name="Malek J.A."/>
            <person name="Ayodeji B."/>
            <person name="Shatsman S."/>
            <person name="McLeod M.P."/>
            <person name="Smajs D."/>
            <person name="Howell J.K."/>
            <person name="Pal S."/>
            <person name="Amin A."/>
            <person name="Vashisth P."/>
            <person name="McNeill T.Z."/>
            <person name="Xiang Q."/>
            <person name="Sodergren E."/>
            <person name="Baca E."/>
            <person name="Weinstock G.M."/>
            <person name="Norris S.J."/>
            <person name="Fraser C.M."/>
            <person name="Paulsen I.T."/>
        </authorList>
    </citation>
    <scope>NUCLEOTIDE SEQUENCE [LARGE SCALE GENOMIC DNA]</scope>
    <source>
        <strain>ATCC 35405 / DSM 14222 / CIP 103919 / JCM 8153 / KCTC 15104</strain>
    </source>
</reference>
<dbReference type="EC" id="2.4.99.17" evidence="1"/>
<dbReference type="EMBL" id="AE017226">
    <property type="protein sequence ID" value="AAS12969.1"/>
    <property type="molecule type" value="Genomic_DNA"/>
</dbReference>
<dbReference type="RefSeq" id="NP_973050.1">
    <property type="nucleotide sequence ID" value="NC_002967.9"/>
</dbReference>
<dbReference type="RefSeq" id="WP_010957235.1">
    <property type="nucleotide sequence ID" value="NC_002967.9"/>
</dbReference>
<dbReference type="SMR" id="Q73JQ7"/>
<dbReference type="STRING" id="243275.TDE_2451"/>
<dbReference type="PaxDb" id="243275-TDE_2451"/>
<dbReference type="GeneID" id="2739636"/>
<dbReference type="KEGG" id="tde:TDE_2451"/>
<dbReference type="PATRIC" id="fig|243275.7.peg.2319"/>
<dbReference type="eggNOG" id="COG0809">
    <property type="taxonomic scope" value="Bacteria"/>
</dbReference>
<dbReference type="HOGENOM" id="CLU_039110_1_0_12"/>
<dbReference type="OrthoDB" id="9805933at2"/>
<dbReference type="UniPathway" id="UPA00392"/>
<dbReference type="Proteomes" id="UP000008212">
    <property type="component" value="Chromosome"/>
</dbReference>
<dbReference type="GO" id="GO:0005737">
    <property type="term" value="C:cytoplasm"/>
    <property type="evidence" value="ECO:0007669"/>
    <property type="project" value="UniProtKB-SubCell"/>
</dbReference>
<dbReference type="GO" id="GO:0051075">
    <property type="term" value="F:S-adenosylmethionine:tRNA ribosyltransferase-isomerase activity"/>
    <property type="evidence" value="ECO:0007669"/>
    <property type="project" value="UniProtKB-EC"/>
</dbReference>
<dbReference type="GO" id="GO:0008616">
    <property type="term" value="P:queuosine biosynthetic process"/>
    <property type="evidence" value="ECO:0007669"/>
    <property type="project" value="UniProtKB-UniRule"/>
</dbReference>
<dbReference type="GO" id="GO:0002099">
    <property type="term" value="P:tRNA wobble guanine modification"/>
    <property type="evidence" value="ECO:0007669"/>
    <property type="project" value="TreeGrafter"/>
</dbReference>
<dbReference type="FunFam" id="3.40.1780.10:FF:000001">
    <property type="entry name" value="S-adenosylmethionine:tRNA ribosyltransferase-isomerase"/>
    <property type="match status" value="1"/>
</dbReference>
<dbReference type="Gene3D" id="2.40.10.240">
    <property type="entry name" value="QueA-like"/>
    <property type="match status" value="1"/>
</dbReference>
<dbReference type="Gene3D" id="3.40.1780.10">
    <property type="entry name" value="QueA-like"/>
    <property type="match status" value="1"/>
</dbReference>
<dbReference type="HAMAP" id="MF_00113">
    <property type="entry name" value="QueA"/>
    <property type="match status" value="1"/>
</dbReference>
<dbReference type="InterPro" id="IPR003699">
    <property type="entry name" value="QueA"/>
</dbReference>
<dbReference type="InterPro" id="IPR042118">
    <property type="entry name" value="QueA_dom1"/>
</dbReference>
<dbReference type="InterPro" id="IPR042119">
    <property type="entry name" value="QueA_dom2"/>
</dbReference>
<dbReference type="InterPro" id="IPR036100">
    <property type="entry name" value="QueA_sf"/>
</dbReference>
<dbReference type="NCBIfam" id="NF001140">
    <property type="entry name" value="PRK00147.1"/>
    <property type="match status" value="1"/>
</dbReference>
<dbReference type="NCBIfam" id="TIGR00113">
    <property type="entry name" value="queA"/>
    <property type="match status" value="1"/>
</dbReference>
<dbReference type="PANTHER" id="PTHR30307">
    <property type="entry name" value="S-ADENOSYLMETHIONINE:TRNA RIBOSYLTRANSFERASE-ISOMERASE"/>
    <property type="match status" value="1"/>
</dbReference>
<dbReference type="PANTHER" id="PTHR30307:SF0">
    <property type="entry name" value="S-ADENOSYLMETHIONINE:TRNA RIBOSYLTRANSFERASE-ISOMERASE"/>
    <property type="match status" value="1"/>
</dbReference>
<dbReference type="Pfam" id="PF02547">
    <property type="entry name" value="Queuosine_synth"/>
    <property type="match status" value="1"/>
</dbReference>
<dbReference type="SUPFAM" id="SSF111337">
    <property type="entry name" value="QueA-like"/>
    <property type="match status" value="1"/>
</dbReference>
<name>QUEA_TREDE</name>